<name>5HT1F_MOUSE</name>
<keyword id="KW-1003">Cell membrane</keyword>
<keyword id="KW-1015">Disulfide bond</keyword>
<keyword id="KW-0297">G-protein coupled receptor</keyword>
<keyword id="KW-0325">Glycoprotein</keyword>
<keyword id="KW-0472">Membrane</keyword>
<keyword id="KW-0675">Receptor</keyword>
<keyword id="KW-1185">Reference proteome</keyword>
<keyword id="KW-0807">Transducer</keyword>
<keyword id="KW-0812">Transmembrane</keyword>
<keyword id="KW-1133">Transmembrane helix</keyword>
<feature type="chain" id="PRO_0000068938" description="5-hydroxytryptamine receptor 1F">
    <location>
        <begin position="1"/>
        <end position="366"/>
    </location>
</feature>
<feature type="topological domain" description="Extracellular" evidence="2">
    <location>
        <begin position="1"/>
        <end position="24"/>
    </location>
</feature>
<feature type="transmembrane region" description="Helical; Name=1" evidence="2">
    <location>
        <begin position="25"/>
        <end position="49"/>
    </location>
</feature>
<feature type="topological domain" description="Cytoplasmic" evidence="2">
    <location>
        <begin position="50"/>
        <end position="59"/>
    </location>
</feature>
<feature type="transmembrane region" description="Helical; Name=2" evidence="2">
    <location>
        <begin position="60"/>
        <end position="81"/>
    </location>
</feature>
<feature type="topological domain" description="Extracellular" evidence="2">
    <location>
        <begin position="82"/>
        <end position="96"/>
    </location>
</feature>
<feature type="transmembrane region" description="Helical; Name=3" evidence="2">
    <location>
        <begin position="97"/>
        <end position="119"/>
    </location>
</feature>
<feature type="topological domain" description="Cytoplasmic" evidence="2">
    <location>
        <begin position="120"/>
        <end position="139"/>
    </location>
</feature>
<feature type="transmembrane region" description="Helical; Name=4" evidence="2">
    <location>
        <begin position="140"/>
        <end position="159"/>
    </location>
</feature>
<feature type="topological domain" description="Extracellular" evidence="2">
    <location>
        <begin position="160"/>
        <end position="178"/>
    </location>
</feature>
<feature type="transmembrane region" description="Helical; Name=5" evidence="2">
    <location>
        <begin position="179"/>
        <end position="202"/>
    </location>
</feature>
<feature type="topological domain" description="Cytoplasmic" evidence="2">
    <location>
        <begin position="203"/>
        <end position="291"/>
    </location>
</feature>
<feature type="transmembrane region" description="Helical; Name=6" evidence="2">
    <location>
        <begin position="292"/>
        <end position="315"/>
    </location>
</feature>
<feature type="topological domain" description="Extracellular" evidence="2">
    <location>
        <begin position="316"/>
        <end position="327"/>
    </location>
</feature>
<feature type="transmembrane region" description="Helical; Name=7" evidence="2">
    <location>
        <begin position="328"/>
        <end position="350"/>
    </location>
</feature>
<feature type="topological domain" description="Cytoplasmic" evidence="2">
    <location>
        <begin position="351"/>
        <end position="366"/>
    </location>
</feature>
<feature type="short sequence motif" description="DRY motif; important for ligand-induced conformation changes" evidence="3">
    <location>
        <begin position="120"/>
        <end position="122"/>
    </location>
</feature>
<feature type="short sequence motif" description="NPxxY motif; important for ligand-induced conformation changes and signaling" evidence="3">
    <location>
        <begin position="343"/>
        <end position="347"/>
    </location>
</feature>
<feature type="binding site" evidence="1">
    <location>
        <position position="103"/>
    </location>
    <ligand>
        <name>serotonin</name>
        <dbReference type="ChEBI" id="CHEBI:350546"/>
    </ligand>
</feature>
<feature type="binding site" evidence="1">
    <location>
        <position position="107"/>
    </location>
    <ligand>
        <name>serotonin</name>
        <dbReference type="ChEBI" id="CHEBI:350546"/>
    </ligand>
</feature>
<feature type="glycosylation site" description="N-linked (GlcNAc...) asparagine" evidence="4">
    <location>
        <position position="5"/>
    </location>
</feature>
<feature type="glycosylation site" description="N-linked (GlcNAc...) asparagine" evidence="4">
    <location>
        <position position="10"/>
    </location>
</feature>
<feature type="disulfide bond" evidence="5">
    <location>
        <begin position="96"/>
        <end position="172"/>
    </location>
</feature>
<sequence length="366" mass="41977">MDFLNASDQNLTSEELLNRMPSKILVSLTLSGLALMTTTINSLVIAAIIVTRKLHHPANYLICSLAVTDFLVAVLVMPFSIVYIVRESWIMGQVLCDIWLSVDIICCTCSILHLSAIALDRYRAITDAVEYARKRTPRHAGIMITIVWVISVFISMPPLFWRHQGTSRDDECVIKHDHIVSTIYSTFGAFYIPLVLILILYYKIYRAARTLYHKRQASRMIKEELNGQVFLESGEKSIKLVSTSYMLEKSLSDPSTDFDRIHSTVKSPRSELKHEKSWRRQKISGTRERKAATTLGLILGAFVICWLPFFVKELVVNVCEKCKISEEMSNFLAWLGYLNSLINPLIYTIFNEDFKKAFQKLVRCRY</sequence>
<reference key="1">
    <citation type="journal article" date="1992" name="J. Biol. Chem.">
        <title>Isolation of a mouse '5HT1E-like' serotonin receptor expressed predominantly in hippocampus.</title>
        <authorList>
            <person name="Amlaiky N."/>
            <person name="Ramboz S."/>
            <person name="Boschert U."/>
            <person name="Plassat J.-L."/>
            <person name="Hen R."/>
        </authorList>
    </citation>
    <scope>NUCLEOTIDE SEQUENCE [MRNA]</scope>
    <scope>FUNCTION</scope>
    <scope>SUBCELLULAR LOCATION</scope>
    <scope>TISSUE SPECIFICITY</scope>
</reference>
<protein>
    <recommendedName>
        <fullName>5-hydroxytryptamine receptor 1F</fullName>
        <shortName>5-HT-1F</shortName>
        <shortName>5-HT1F</shortName>
    </recommendedName>
    <alternativeName>
        <fullName>5-HT-1E-beta</fullName>
    </alternativeName>
    <alternativeName>
        <fullName>Serotonin receptor 1F</fullName>
    </alternativeName>
</protein>
<proteinExistence type="evidence at transcript level"/>
<evidence type="ECO:0000250" key="1">
    <source>
        <dbReference type="UniProtKB" id="P28221"/>
    </source>
</evidence>
<evidence type="ECO:0000250" key="2">
    <source>
        <dbReference type="UniProtKB" id="P30939"/>
    </source>
</evidence>
<evidence type="ECO:0000250" key="3">
    <source>
        <dbReference type="UniProtKB" id="P41595"/>
    </source>
</evidence>
<evidence type="ECO:0000255" key="4"/>
<evidence type="ECO:0000255" key="5">
    <source>
        <dbReference type="PROSITE-ProRule" id="PRU00521"/>
    </source>
</evidence>
<evidence type="ECO:0000269" key="6">
    <source>
    </source>
</evidence>
<organism>
    <name type="scientific">Mus musculus</name>
    <name type="common">Mouse</name>
    <dbReference type="NCBI Taxonomy" id="10090"/>
    <lineage>
        <taxon>Eukaryota</taxon>
        <taxon>Metazoa</taxon>
        <taxon>Chordata</taxon>
        <taxon>Craniata</taxon>
        <taxon>Vertebrata</taxon>
        <taxon>Euteleostomi</taxon>
        <taxon>Mammalia</taxon>
        <taxon>Eutheria</taxon>
        <taxon>Euarchontoglires</taxon>
        <taxon>Glires</taxon>
        <taxon>Rodentia</taxon>
        <taxon>Myomorpha</taxon>
        <taxon>Muroidea</taxon>
        <taxon>Muridae</taxon>
        <taxon>Murinae</taxon>
        <taxon>Mus</taxon>
        <taxon>Mus</taxon>
    </lineage>
</organism>
<accession>Q02284</accession>
<dbReference type="EMBL" id="Z14224">
    <property type="protein sequence ID" value="CAA78593.1"/>
    <property type="molecule type" value="mRNA"/>
</dbReference>
<dbReference type="CCDS" id="CCDS28267.1"/>
<dbReference type="PIR" id="S26048">
    <property type="entry name" value="S26048"/>
</dbReference>
<dbReference type="RefSeq" id="NP_032336.1">
    <property type="nucleotide sequence ID" value="NM_008310.3"/>
</dbReference>
<dbReference type="SMR" id="Q02284"/>
<dbReference type="FunCoup" id="Q02284">
    <property type="interactions" value="947"/>
</dbReference>
<dbReference type="STRING" id="10090.ENSMUSP00000063136"/>
<dbReference type="BindingDB" id="Q02284"/>
<dbReference type="GuidetoPHARMACOLOGY" id="5"/>
<dbReference type="GlyCosmos" id="Q02284">
    <property type="glycosylation" value="2 sites, No reported glycans"/>
</dbReference>
<dbReference type="GlyGen" id="Q02284">
    <property type="glycosylation" value="2 sites"/>
</dbReference>
<dbReference type="PhosphoSitePlus" id="Q02284"/>
<dbReference type="PaxDb" id="10090-ENSMUSP00000063136"/>
<dbReference type="ProteomicsDB" id="285573"/>
<dbReference type="Antibodypedia" id="1481">
    <property type="antibodies" value="200 antibodies from 29 providers"/>
</dbReference>
<dbReference type="DNASU" id="15557"/>
<dbReference type="Ensembl" id="ENSMUST00000063076.6">
    <property type="protein sequence ID" value="ENSMUSP00000063136.5"/>
    <property type="gene ID" value="ENSMUSG00000050783.6"/>
</dbReference>
<dbReference type="GeneID" id="15557"/>
<dbReference type="KEGG" id="mmu:15557"/>
<dbReference type="UCSC" id="uc007zqg.2">
    <property type="organism name" value="mouse"/>
</dbReference>
<dbReference type="AGR" id="MGI:99842"/>
<dbReference type="CTD" id="3355"/>
<dbReference type="MGI" id="MGI:99842">
    <property type="gene designation" value="Htr1f"/>
</dbReference>
<dbReference type="VEuPathDB" id="HostDB:ENSMUSG00000050783"/>
<dbReference type="eggNOG" id="KOG3656">
    <property type="taxonomic scope" value="Eukaryota"/>
</dbReference>
<dbReference type="GeneTree" id="ENSGT01010000222287"/>
<dbReference type="HOGENOM" id="CLU_009579_11_1_1"/>
<dbReference type="InParanoid" id="Q02284"/>
<dbReference type="OMA" id="CVIKHDH"/>
<dbReference type="OrthoDB" id="5956310at2759"/>
<dbReference type="PhylomeDB" id="Q02284"/>
<dbReference type="TreeFam" id="TF316350"/>
<dbReference type="Reactome" id="R-MMU-390666">
    <property type="pathway name" value="Serotonin receptors"/>
</dbReference>
<dbReference type="Reactome" id="R-MMU-418594">
    <property type="pathway name" value="G alpha (i) signalling events"/>
</dbReference>
<dbReference type="BioGRID-ORCS" id="15557">
    <property type="hits" value="0 hits in 77 CRISPR screens"/>
</dbReference>
<dbReference type="ChiTaRS" id="Htr1f">
    <property type="organism name" value="mouse"/>
</dbReference>
<dbReference type="PRO" id="PR:Q02284"/>
<dbReference type="Proteomes" id="UP000000589">
    <property type="component" value="Chromosome 16"/>
</dbReference>
<dbReference type="RNAct" id="Q02284">
    <property type="molecule type" value="protein"/>
</dbReference>
<dbReference type="Bgee" id="ENSMUSG00000050783">
    <property type="expression patterns" value="Expressed in lumbar dorsal root ganglion and 56 other cell types or tissues"/>
</dbReference>
<dbReference type="ExpressionAtlas" id="Q02284">
    <property type="expression patterns" value="baseline and differential"/>
</dbReference>
<dbReference type="GO" id="GO:0005886">
    <property type="term" value="C:plasma membrane"/>
    <property type="evidence" value="ECO:0000250"/>
    <property type="project" value="UniProtKB"/>
</dbReference>
<dbReference type="GO" id="GO:0004993">
    <property type="term" value="F:G protein-coupled serotonin receptor activity"/>
    <property type="evidence" value="ECO:0000250"/>
    <property type="project" value="UniProtKB"/>
</dbReference>
<dbReference type="GO" id="GO:0001586">
    <property type="term" value="F:Gi/o-coupled serotonin receptor activity"/>
    <property type="evidence" value="ECO:0007669"/>
    <property type="project" value="Ensembl"/>
</dbReference>
<dbReference type="GO" id="GO:0051378">
    <property type="term" value="F:serotonin binding"/>
    <property type="evidence" value="ECO:0000250"/>
    <property type="project" value="MGI"/>
</dbReference>
<dbReference type="GO" id="GO:0099589">
    <property type="term" value="F:serotonin receptor activity"/>
    <property type="evidence" value="ECO:0007669"/>
    <property type="project" value="Ensembl"/>
</dbReference>
<dbReference type="GO" id="GO:0007193">
    <property type="term" value="P:adenylate cyclase-inhibiting G protein-coupled receptor signaling pathway"/>
    <property type="evidence" value="ECO:0000250"/>
    <property type="project" value="UniProtKB"/>
</dbReference>
<dbReference type="GO" id="GO:0007198">
    <property type="term" value="P:adenylate cyclase-inhibiting serotonin receptor signaling pathway"/>
    <property type="evidence" value="ECO:0007669"/>
    <property type="project" value="Ensembl"/>
</dbReference>
<dbReference type="CDD" id="cd15334">
    <property type="entry name" value="7tmA_5-HT1F"/>
    <property type="match status" value="1"/>
</dbReference>
<dbReference type="FunFam" id="1.20.1070.10:FF:000085">
    <property type="entry name" value="5-hydroxytryptamine receptor 1F"/>
    <property type="match status" value="1"/>
</dbReference>
<dbReference type="Gene3D" id="1.20.1070.10">
    <property type="entry name" value="Rhodopsin 7-helix transmembrane proteins"/>
    <property type="match status" value="1"/>
</dbReference>
<dbReference type="InterPro" id="IPR000450">
    <property type="entry name" value="5HT1F_rcpt"/>
</dbReference>
<dbReference type="InterPro" id="IPR002231">
    <property type="entry name" value="5HT_rcpt"/>
</dbReference>
<dbReference type="InterPro" id="IPR000276">
    <property type="entry name" value="GPCR_Rhodpsn"/>
</dbReference>
<dbReference type="InterPro" id="IPR017452">
    <property type="entry name" value="GPCR_Rhodpsn_7TM"/>
</dbReference>
<dbReference type="PANTHER" id="PTHR24248:SF196">
    <property type="entry name" value="5-HYDROXYTRYPTAMINE RECEPTOR 1D"/>
    <property type="match status" value="1"/>
</dbReference>
<dbReference type="PANTHER" id="PTHR24248">
    <property type="entry name" value="ADRENERGIC RECEPTOR-RELATED G-PROTEIN COUPLED RECEPTOR"/>
    <property type="match status" value="1"/>
</dbReference>
<dbReference type="Pfam" id="PF00001">
    <property type="entry name" value="7tm_1"/>
    <property type="match status" value="1"/>
</dbReference>
<dbReference type="PRINTS" id="PR00515">
    <property type="entry name" value="5HT1FRECEPTR"/>
</dbReference>
<dbReference type="PRINTS" id="PR01101">
    <property type="entry name" value="5HTRECEPTOR"/>
</dbReference>
<dbReference type="PRINTS" id="PR00237">
    <property type="entry name" value="GPCRRHODOPSN"/>
</dbReference>
<dbReference type="SMART" id="SM01381">
    <property type="entry name" value="7TM_GPCR_Srsx"/>
    <property type="match status" value="1"/>
</dbReference>
<dbReference type="SUPFAM" id="SSF81321">
    <property type="entry name" value="Family A G protein-coupled receptor-like"/>
    <property type="match status" value="1"/>
</dbReference>
<dbReference type="PROSITE" id="PS00237">
    <property type="entry name" value="G_PROTEIN_RECEP_F1_1"/>
    <property type="match status" value="1"/>
</dbReference>
<dbReference type="PROSITE" id="PS50262">
    <property type="entry name" value="G_PROTEIN_RECEP_F1_2"/>
    <property type="match status" value="1"/>
</dbReference>
<gene>
    <name type="primary">Htr1f</name>
    <name type="synonym">5ht1f</name>
    <name type="synonym">Htr1eb</name>
</gene>
<comment type="function">
    <text evidence="2 6">G-protein coupled receptor for 5-hydroxytryptamine (serotonin) (PubMed:1328180). Also functions as a receptor for various alkaloids and psychoactive substances (By similarity). Ligand binding causes a conformation change that triggers signaling via guanine nucleotide-binding proteins (G proteins) and modulates the activity of downstream effectors, such as adenylate cyclase (By similarity). HTR1F is coupled to G(i)/G(o) G alpha proteins and mediates inhibitory neurotransmission by inhibiting adenylate cyclase activity (By similarity).</text>
</comment>
<comment type="subcellular location">
    <subcellularLocation>
        <location evidence="6">Cell membrane</location>
        <topology evidence="2">Multi-pass membrane protein</topology>
    </subcellularLocation>
</comment>
<comment type="tissue specificity">
    <text evidence="6">Detected in hippocampus.</text>
</comment>
<comment type="similarity">
    <text evidence="5">Belongs to the G-protein coupled receptor 1 family.</text>
</comment>